<name>CLPR1_ARATH</name>
<organism>
    <name type="scientific">Arabidopsis thaliana</name>
    <name type="common">Mouse-ear cress</name>
    <dbReference type="NCBI Taxonomy" id="3702"/>
    <lineage>
        <taxon>Eukaryota</taxon>
        <taxon>Viridiplantae</taxon>
        <taxon>Streptophyta</taxon>
        <taxon>Embryophyta</taxon>
        <taxon>Tracheophyta</taxon>
        <taxon>Spermatophyta</taxon>
        <taxon>Magnoliopsida</taxon>
        <taxon>eudicotyledons</taxon>
        <taxon>Gunneridae</taxon>
        <taxon>Pentapetalae</taxon>
        <taxon>rosids</taxon>
        <taxon>malvids</taxon>
        <taxon>Brassicales</taxon>
        <taxon>Brassicaceae</taxon>
        <taxon>Camelineae</taxon>
        <taxon>Arabidopsis</taxon>
    </lineage>
</organism>
<dbReference type="EMBL" id="AB022330">
    <property type="protein sequence ID" value="BAA82069.1"/>
    <property type="molecule type" value="mRNA"/>
</dbReference>
<dbReference type="EMBL" id="AC015445">
    <property type="protein sequence ID" value="AAF76446.1"/>
    <property type="molecule type" value="Genomic_DNA"/>
</dbReference>
<dbReference type="EMBL" id="CP002684">
    <property type="protein sequence ID" value="AEE32501.1"/>
    <property type="molecule type" value="Genomic_DNA"/>
</dbReference>
<dbReference type="EMBL" id="AY045677">
    <property type="protein sequence ID" value="AAK74035.1"/>
    <property type="molecule type" value="mRNA"/>
</dbReference>
<dbReference type="EMBL" id="BT000572">
    <property type="protein sequence ID" value="AAN18141.1"/>
    <property type="molecule type" value="mRNA"/>
</dbReference>
<dbReference type="PIR" id="T52451">
    <property type="entry name" value="T52451"/>
</dbReference>
<dbReference type="RefSeq" id="NP_564560.1">
    <property type="nucleotide sequence ID" value="NM_103884.4"/>
</dbReference>
<dbReference type="SMR" id="Q9XJ35"/>
<dbReference type="BioGRID" id="26645">
    <property type="interactions" value="7"/>
</dbReference>
<dbReference type="FunCoup" id="Q9XJ35">
    <property type="interactions" value="2328"/>
</dbReference>
<dbReference type="IntAct" id="Q9XJ35">
    <property type="interactions" value="1"/>
</dbReference>
<dbReference type="STRING" id="3702.Q9XJ35"/>
<dbReference type="iPTMnet" id="Q9XJ35"/>
<dbReference type="PaxDb" id="3702-AT1G49970.1"/>
<dbReference type="ProteomicsDB" id="246592"/>
<dbReference type="EnsemblPlants" id="AT1G49970.1">
    <property type="protein sequence ID" value="AT1G49970.1"/>
    <property type="gene ID" value="AT1G49970"/>
</dbReference>
<dbReference type="GeneID" id="841420"/>
<dbReference type="Gramene" id="AT1G49970.1">
    <property type="protein sequence ID" value="AT1G49970.1"/>
    <property type="gene ID" value="AT1G49970"/>
</dbReference>
<dbReference type="KEGG" id="ath:AT1G49970"/>
<dbReference type="Araport" id="AT1G49970"/>
<dbReference type="TAIR" id="AT1G49970">
    <property type="gene designation" value="CLPR1"/>
</dbReference>
<dbReference type="eggNOG" id="KOG0840">
    <property type="taxonomic scope" value="Eukaryota"/>
</dbReference>
<dbReference type="HOGENOM" id="CLU_051940_0_0_1"/>
<dbReference type="InParanoid" id="Q9XJ35"/>
<dbReference type="OMA" id="RYSMSVS"/>
<dbReference type="PhylomeDB" id="Q9XJ35"/>
<dbReference type="PRO" id="PR:Q9XJ35"/>
<dbReference type="Proteomes" id="UP000006548">
    <property type="component" value="Chromosome 1"/>
</dbReference>
<dbReference type="ExpressionAtlas" id="Q9XJ35">
    <property type="expression patterns" value="baseline and differential"/>
</dbReference>
<dbReference type="GO" id="GO:0009507">
    <property type="term" value="C:chloroplast"/>
    <property type="evidence" value="ECO:0007005"/>
    <property type="project" value="TAIR"/>
</dbReference>
<dbReference type="GO" id="GO:0009941">
    <property type="term" value="C:chloroplast envelope"/>
    <property type="evidence" value="ECO:0007005"/>
    <property type="project" value="TAIR"/>
</dbReference>
<dbReference type="GO" id="GO:0009570">
    <property type="term" value="C:chloroplast stroma"/>
    <property type="evidence" value="ECO:0007005"/>
    <property type="project" value="TAIR"/>
</dbReference>
<dbReference type="GO" id="GO:0009534">
    <property type="term" value="C:chloroplast thylakoid"/>
    <property type="evidence" value="ECO:0000314"/>
    <property type="project" value="TAIR"/>
</dbReference>
<dbReference type="GO" id="GO:0009840">
    <property type="term" value="C:chloroplastic endopeptidase Clp complex"/>
    <property type="evidence" value="ECO:0000314"/>
    <property type="project" value="TAIR"/>
</dbReference>
<dbReference type="GO" id="GO:0005634">
    <property type="term" value="C:nucleus"/>
    <property type="evidence" value="ECO:0007005"/>
    <property type="project" value="TAIR"/>
</dbReference>
<dbReference type="GO" id="GO:0009532">
    <property type="term" value="C:plastid stroma"/>
    <property type="evidence" value="ECO:0000314"/>
    <property type="project" value="TAIR"/>
</dbReference>
<dbReference type="GO" id="GO:0004176">
    <property type="term" value="F:ATP-dependent peptidase activity"/>
    <property type="evidence" value="ECO:0007669"/>
    <property type="project" value="InterPro"/>
</dbReference>
<dbReference type="GO" id="GO:0003723">
    <property type="term" value="F:RNA binding"/>
    <property type="evidence" value="ECO:0000314"/>
    <property type="project" value="UniProtKB"/>
</dbReference>
<dbReference type="GO" id="GO:0004252">
    <property type="term" value="F:serine-type endopeptidase activity"/>
    <property type="evidence" value="ECO:0007669"/>
    <property type="project" value="InterPro"/>
</dbReference>
<dbReference type="GO" id="GO:0009658">
    <property type="term" value="P:chloroplast organization"/>
    <property type="evidence" value="ECO:0000315"/>
    <property type="project" value="UniProtKB"/>
</dbReference>
<dbReference type="GO" id="GO:0006508">
    <property type="term" value="P:proteolysis"/>
    <property type="evidence" value="ECO:0007669"/>
    <property type="project" value="InterPro"/>
</dbReference>
<dbReference type="GO" id="GO:0006396">
    <property type="term" value="P:RNA processing"/>
    <property type="evidence" value="ECO:0000314"/>
    <property type="project" value="UniProtKB"/>
</dbReference>
<dbReference type="GO" id="GO:0006364">
    <property type="term" value="P:rRNA processing"/>
    <property type="evidence" value="ECO:0000315"/>
    <property type="project" value="UniProtKB"/>
</dbReference>
<dbReference type="CDD" id="cd07017">
    <property type="entry name" value="S14_ClpP_2"/>
    <property type="match status" value="1"/>
</dbReference>
<dbReference type="FunFam" id="3.90.226.10:FF:000020">
    <property type="entry name" value="ATP-dependent Clp protease proteolytic subunit"/>
    <property type="match status" value="1"/>
</dbReference>
<dbReference type="Gene3D" id="3.90.226.10">
    <property type="entry name" value="2-enoyl-CoA Hydratase, Chain A, domain 1"/>
    <property type="match status" value="1"/>
</dbReference>
<dbReference type="InterPro" id="IPR001907">
    <property type="entry name" value="ClpP"/>
</dbReference>
<dbReference type="InterPro" id="IPR029045">
    <property type="entry name" value="ClpP/crotonase-like_dom_sf"/>
</dbReference>
<dbReference type="InterPro" id="IPR023562">
    <property type="entry name" value="ClpP/TepA"/>
</dbReference>
<dbReference type="PANTHER" id="PTHR10381">
    <property type="entry name" value="ATP-DEPENDENT CLP PROTEASE PROTEOLYTIC SUBUNIT"/>
    <property type="match status" value="1"/>
</dbReference>
<dbReference type="PANTHER" id="PTHR10381:SF55">
    <property type="entry name" value="ATP-DEPENDENT CLP PROTEASE PROTEOLYTIC SUBUNIT-RELATED PROTEIN 1, CHLOROPLASTIC"/>
    <property type="match status" value="1"/>
</dbReference>
<dbReference type="Pfam" id="PF00574">
    <property type="entry name" value="CLP_protease"/>
    <property type="match status" value="1"/>
</dbReference>
<dbReference type="PRINTS" id="PR00127">
    <property type="entry name" value="CLPPROTEASEP"/>
</dbReference>
<dbReference type="SUPFAM" id="SSF52096">
    <property type="entry name" value="ClpP/crotonase"/>
    <property type="match status" value="1"/>
</dbReference>
<sequence>MATALVSPLTSQLNHEAVCSKFVLPKSPFMSGSKLFSSNMPCSTVPRRTRRSHCFASAKDMSFDHIPKQFRGDNLKDGVMQNFKNVPQYFYGLNSAQMDMFMTEDSPVRRQAEKVTEESISSRNNYLNNGGIWSMSGMNAADARRYSMSVQMYRGGGGGGGSERPRTAPPDLPSLLLDARICYLGMPIVPAVTELLVAQFMWLDYDNPTKPIYLYINSPGTQNEKMETVGSETEAYAIADTISYCKSDVYTINCGMAFGQAAMLLSLGKKGYRAVQPHSSTKLYLPKVNRSSGAAIDMWIKAKELDANTEYYIELLAKGTGKSKEQINEDIKRPKYLQAQAAIDYGIADKIADSQDSSFEKRDYDGTLAQRAMRPGGGSPAAPAGLR</sequence>
<protein>
    <recommendedName>
        <fullName evidence="12">ATP-dependent Clp protease proteolytic subunit-related protein 1, chloroplastic</fullName>
        <shortName evidence="12">ClpR1</shortName>
    </recommendedName>
    <alternativeName>
        <fullName evidence="13">Protein SUPPRESSOR OF VARIEGATION 2</fullName>
    </alternativeName>
    <alternativeName>
        <fullName>nClpP5</fullName>
    </alternativeName>
</protein>
<proteinExistence type="evidence at protein level"/>
<comment type="function">
    <text evidence="8 9">Required for chloroplast development and differentiation.</text>
</comment>
<comment type="subunit">
    <text evidence="4 5 6 7 11">Component of the chloroplastic Clp protease core complex which consist of at least 16 proteins: CLPP4 (3 copies), CLPP5 (3 copies), CLPR4 (2 copies), ClpP1 (1 copy), CLPP6 (1 copy), CLPR2 (1 copy), CLPT1 (1 copy), CLPT2 (1 copy) and 3 copies of CLPP3 and/or CLPR1 and/or CLPR3 (PubMed:11278690, PubMed:14593120, PubMed:16766689, PubMed:16980539). The core complex is organized in two heptameric rings, one containing CLPP3,4,5,6 in a 1:2:3:1 ratio and the other CLPP1 and CLPR1,2,3,4 in a 3:1:1:1:1 ratio (PubMed:21712416).</text>
</comment>
<comment type="subcellular location">
    <subcellularLocation>
        <location evidence="3 5">Plastid</location>
        <location evidence="3 5">Chloroplast stroma</location>
    </subcellularLocation>
</comment>
<comment type="induction">
    <text evidence="3">Repressed in darkness. Accumulates during leaf senescence.</text>
</comment>
<comment type="disruption phenotype">
    <text evidence="8 10 14">Variegated leaf phenotype (Ref.8). Slow-growth phenotype, with chlorotic leaves during early development (PubMed:17009084, PubMed:18754756).</text>
</comment>
<comment type="similarity">
    <text evidence="15">Belongs to the peptidase S14 family.</text>
</comment>
<feature type="transit peptide" description="Chloroplast" evidence="1">
    <location>
        <begin position="1"/>
        <end position="41"/>
    </location>
</feature>
<feature type="chain" id="PRO_0000308982" description="ATP-dependent Clp protease proteolytic subunit-related protein 1, chloroplastic">
    <location>
        <begin position="42"/>
        <end position="387"/>
    </location>
</feature>
<feature type="region of interest" description="Disordered" evidence="2">
    <location>
        <begin position="355"/>
        <end position="387"/>
    </location>
</feature>
<feature type="compositionally biased region" description="Basic and acidic residues" evidence="2">
    <location>
        <begin position="355"/>
        <end position="365"/>
    </location>
</feature>
<gene>
    <name evidence="12" type="primary">CLPR1</name>
    <name type="synonym">NCLPP5</name>
    <name evidence="13" type="synonym">SVR2</name>
    <name evidence="16" type="ordered locus">At1g49970</name>
    <name evidence="17" type="ORF">F2J10.14</name>
</gene>
<accession>Q9XJ35</accession>
<keyword id="KW-0150">Chloroplast</keyword>
<keyword id="KW-0903">Direct protein sequencing</keyword>
<keyword id="KW-0934">Plastid</keyword>
<keyword id="KW-1185">Reference proteome</keyword>
<keyword id="KW-0809">Transit peptide</keyword>
<reference key="1">
    <citation type="journal article" date="1999" name="Plant Cell Physiol.">
        <title>Identification of clp genes expressed in senescing Arabidopsis leaves.</title>
        <authorList>
            <person name="Nakabayashi K."/>
            <person name="Ito M."/>
            <person name="Kiyosue T."/>
            <person name="Shinozaki K."/>
            <person name="Watanabe A."/>
        </authorList>
    </citation>
    <scope>NUCLEOTIDE SEQUENCE [MRNA]</scope>
    <scope>SUBCELLULAR LOCATION</scope>
    <scope>INDUCTION</scope>
    <source>
        <strain>cv. Columbia</strain>
    </source>
</reference>
<reference key="2">
    <citation type="journal article" date="2000" name="Nature">
        <title>Sequence and analysis of chromosome 1 of the plant Arabidopsis thaliana.</title>
        <authorList>
            <person name="Theologis A."/>
            <person name="Ecker J.R."/>
            <person name="Palm C.J."/>
            <person name="Federspiel N.A."/>
            <person name="Kaul S."/>
            <person name="White O."/>
            <person name="Alonso J."/>
            <person name="Altafi H."/>
            <person name="Araujo R."/>
            <person name="Bowman C.L."/>
            <person name="Brooks S.Y."/>
            <person name="Buehler E."/>
            <person name="Chan A."/>
            <person name="Chao Q."/>
            <person name="Chen H."/>
            <person name="Cheuk R.F."/>
            <person name="Chin C.W."/>
            <person name="Chung M.K."/>
            <person name="Conn L."/>
            <person name="Conway A.B."/>
            <person name="Conway A.R."/>
            <person name="Creasy T.H."/>
            <person name="Dewar K."/>
            <person name="Dunn P."/>
            <person name="Etgu P."/>
            <person name="Feldblyum T.V."/>
            <person name="Feng J.-D."/>
            <person name="Fong B."/>
            <person name="Fujii C.Y."/>
            <person name="Gill J.E."/>
            <person name="Goldsmith A.D."/>
            <person name="Haas B."/>
            <person name="Hansen N.F."/>
            <person name="Hughes B."/>
            <person name="Huizar L."/>
            <person name="Hunter J.L."/>
            <person name="Jenkins J."/>
            <person name="Johnson-Hopson C."/>
            <person name="Khan S."/>
            <person name="Khaykin E."/>
            <person name="Kim C.J."/>
            <person name="Koo H.L."/>
            <person name="Kremenetskaia I."/>
            <person name="Kurtz D.B."/>
            <person name="Kwan A."/>
            <person name="Lam B."/>
            <person name="Langin-Hooper S."/>
            <person name="Lee A."/>
            <person name="Lee J.M."/>
            <person name="Lenz C.A."/>
            <person name="Li J.H."/>
            <person name="Li Y.-P."/>
            <person name="Lin X."/>
            <person name="Liu S.X."/>
            <person name="Liu Z.A."/>
            <person name="Luros J.S."/>
            <person name="Maiti R."/>
            <person name="Marziali A."/>
            <person name="Militscher J."/>
            <person name="Miranda M."/>
            <person name="Nguyen M."/>
            <person name="Nierman W.C."/>
            <person name="Osborne B.I."/>
            <person name="Pai G."/>
            <person name="Peterson J."/>
            <person name="Pham P.K."/>
            <person name="Rizzo M."/>
            <person name="Rooney T."/>
            <person name="Rowley D."/>
            <person name="Sakano H."/>
            <person name="Salzberg S.L."/>
            <person name="Schwartz J.R."/>
            <person name="Shinn P."/>
            <person name="Southwick A.M."/>
            <person name="Sun H."/>
            <person name="Tallon L.J."/>
            <person name="Tambunga G."/>
            <person name="Toriumi M.J."/>
            <person name="Town C.D."/>
            <person name="Utterback T."/>
            <person name="Van Aken S."/>
            <person name="Vaysberg M."/>
            <person name="Vysotskaia V.S."/>
            <person name="Walker M."/>
            <person name="Wu D."/>
            <person name="Yu G."/>
            <person name="Fraser C.M."/>
            <person name="Venter J.C."/>
            <person name="Davis R.W."/>
        </authorList>
    </citation>
    <scope>NUCLEOTIDE SEQUENCE [LARGE SCALE GENOMIC DNA]</scope>
    <source>
        <strain>cv. Columbia</strain>
    </source>
</reference>
<reference key="3">
    <citation type="journal article" date="2017" name="Plant J.">
        <title>Araport11: a complete reannotation of the Arabidopsis thaliana reference genome.</title>
        <authorList>
            <person name="Cheng C.Y."/>
            <person name="Krishnakumar V."/>
            <person name="Chan A.P."/>
            <person name="Thibaud-Nissen F."/>
            <person name="Schobel S."/>
            <person name="Town C.D."/>
        </authorList>
    </citation>
    <scope>GENOME REANNOTATION</scope>
    <source>
        <strain>cv. Columbia</strain>
    </source>
</reference>
<reference key="4">
    <citation type="journal article" date="2003" name="Science">
        <title>Empirical analysis of transcriptional activity in the Arabidopsis genome.</title>
        <authorList>
            <person name="Yamada K."/>
            <person name="Lim J."/>
            <person name="Dale J.M."/>
            <person name="Chen H."/>
            <person name="Shinn P."/>
            <person name="Palm C.J."/>
            <person name="Southwick A.M."/>
            <person name="Wu H.C."/>
            <person name="Kim C.J."/>
            <person name="Nguyen M."/>
            <person name="Pham P.K."/>
            <person name="Cheuk R.F."/>
            <person name="Karlin-Newmann G."/>
            <person name="Liu S.X."/>
            <person name="Lam B."/>
            <person name="Sakano H."/>
            <person name="Wu T."/>
            <person name="Yu G."/>
            <person name="Miranda M."/>
            <person name="Quach H.L."/>
            <person name="Tripp M."/>
            <person name="Chang C.H."/>
            <person name="Lee J.M."/>
            <person name="Toriumi M.J."/>
            <person name="Chan M.M."/>
            <person name="Tang C.C."/>
            <person name="Onodera C.S."/>
            <person name="Deng J.M."/>
            <person name="Akiyama K."/>
            <person name="Ansari Y."/>
            <person name="Arakawa T."/>
            <person name="Banh J."/>
            <person name="Banno F."/>
            <person name="Bowser L."/>
            <person name="Brooks S.Y."/>
            <person name="Carninci P."/>
            <person name="Chao Q."/>
            <person name="Choy N."/>
            <person name="Enju A."/>
            <person name="Goldsmith A.D."/>
            <person name="Gurjal M."/>
            <person name="Hansen N.F."/>
            <person name="Hayashizaki Y."/>
            <person name="Johnson-Hopson C."/>
            <person name="Hsuan V.W."/>
            <person name="Iida K."/>
            <person name="Karnes M."/>
            <person name="Khan S."/>
            <person name="Koesema E."/>
            <person name="Ishida J."/>
            <person name="Jiang P.X."/>
            <person name="Jones T."/>
            <person name="Kawai J."/>
            <person name="Kamiya A."/>
            <person name="Meyers C."/>
            <person name="Nakajima M."/>
            <person name="Narusaka M."/>
            <person name="Seki M."/>
            <person name="Sakurai T."/>
            <person name="Satou M."/>
            <person name="Tamse R."/>
            <person name="Vaysberg M."/>
            <person name="Wallender E.K."/>
            <person name="Wong C."/>
            <person name="Yamamura Y."/>
            <person name="Yuan S."/>
            <person name="Shinozaki K."/>
            <person name="Davis R.W."/>
            <person name="Theologis A."/>
            <person name="Ecker J.R."/>
        </authorList>
    </citation>
    <scope>NUCLEOTIDE SEQUENCE [LARGE SCALE MRNA]</scope>
    <source>
        <strain>cv. Columbia</strain>
    </source>
</reference>
<reference key="5">
    <citation type="journal article" date="2001" name="J. Biol. Chem.">
        <title>Identification of a 350-kDa ClpP protease complex with 10 different Clp isoforms in chloroplasts of Arabidopsis thaliana.</title>
        <authorList>
            <person name="Peltier J.-B."/>
            <person name="Ytterberg J."/>
            <person name="Liberles D.A."/>
            <person name="Roepstorff P."/>
            <person name="van Wijk K.J."/>
        </authorList>
    </citation>
    <scope>PROTEIN SEQUENCE OF 167-180 AND 304-318</scope>
    <scope>SUBUNIT</scope>
    <scope>IDENTIFICATION BY MASS SPECTROMETRY</scope>
</reference>
<reference key="6">
    <citation type="journal article" date="2001" name="Plant Physiol.">
        <title>Chloroplast and mitochondrial proteases in Arabidopsis. A proposed nomenclature.</title>
        <authorList>
            <person name="Adam Z."/>
            <person name="Adamska I."/>
            <person name="Nakabayashi K."/>
            <person name="Ostersetzer O."/>
            <person name="Haussuhl K."/>
            <person name="Manuell A."/>
            <person name="Zheng B."/>
            <person name="Vallon O."/>
            <person name="Rodermel S.R."/>
            <person name="Shinozaki K."/>
            <person name="Clarke A.K."/>
        </authorList>
    </citation>
    <scope>GENE FAMILY</scope>
    <scope>NOMENCLATURE</scope>
</reference>
<reference key="7">
    <citation type="journal article" date="2004" name="J. Biol. Chem.">
        <title>Clp protease complexes from photosynthetic and non-photosynthetic plastids and mitochondria of plants, their predicted three-dimensional structures, and functional implications.</title>
        <authorList>
            <person name="Peltier J.-B."/>
            <person name="Ripoll D.R."/>
            <person name="Friso G."/>
            <person name="Rudella A."/>
            <person name="Cai Y."/>
            <person name="Ytterberg J."/>
            <person name="Giacomelli L."/>
            <person name="Pillardy J."/>
            <person name="van Wijk K.J."/>
        </authorList>
    </citation>
    <scope>IDENTIFICATION BY MASS SPECTROMETRY</scope>
    <scope>SUBUNIT</scope>
    <scope>SUBCELLULAR LOCATION</scope>
    <scope>3D-STRUCTURE MODELING</scope>
</reference>
<reference key="8">
    <citation type="journal article" date="2005" name="Physiol. Plantarum">
        <title>The ATP-dependent Clp protease in chloroplasts of higher plants.</title>
        <authorList>
            <person name="Clarke A.K."/>
            <person name="MacDonald T.M."/>
            <person name="Sjoegren L.L."/>
        </authorList>
    </citation>
    <scope>NOMENCLATURE</scope>
    <scope>DISRUPTION PHENOTYPE</scope>
</reference>
<reference key="9">
    <citation type="journal article" date="2006" name="Plant Cell">
        <title>Downregulation of ClpR2 leads to reduced accumulation of the ClpPRS protease complex and defects in chloroplast biogenesis in Arabidopsis.</title>
        <authorList>
            <person name="Rudella A."/>
            <person name="Friso G."/>
            <person name="Alonso J.M."/>
            <person name="Ecker J.R."/>
            <person name="van Wijk K.J."/>
        </authorList>
    </citation>
    <scope>IDENTIFICATION BY MASS SPECTROMETRY</scope>
    <scope>SUBUNIT</scope>
</reference>
<reference key="10">
    <citation type="journal article" date="2006" name="Plant Cell">
        <title>Structural and functional insights into the chloroplast ATP-dependent Clp protease in Arabidopsis.</title>
        <authorList>
            <person name="Sjoegren L.L.E."/>
            <person name="Stanne T.M."/>
            <person name="Zheng B."/>
            <person name="Sutinen S."/>
            <person name="Clarke A.K."/>
        </authorList>
    </citation>
    <scope>SUBUNIT</scope>
</reference>
<reference key="11">
    <citation type="journal article" date="2007" name="Plant Mol. Biol.">
        <title>An Arabidopsis thaliana virescent mutant reveals a role for ClpR1 in plastid development.</title>
        <authorList>
            <person name="Koussevitzky S."/>
            <person name="Stanne T.M."/>
            <person name="Peto C.A."/>
            <person name="Giap T."/>
            <person name="Sjoegren L.L.E."/>
            <person name="Zhao Y."/>
            <person name="Clarke A.K."/>
            <person name="Chory J."/>
        </authorList>
    </citation>
    <scope>FUNCTION</scope>
</reference>
<reference key="12">
    <citation type="journal article" date="2008" name="Plant Cell">
        <title>Mutations in SUPPRESSOR OF VARIEGATION1, a factor required for normal chloroplast translation, suppress var2-mediated leaf variegation in Arabidopsis.</title>
        <authorList>
            <person name="Yu F."/>
            <person name="Liu X."/>
            <person name="Alsheikh M."/>
            <person name="Park S."/>
            <person name="Rodermel S."/>
        </authorList>
    </citation>
    <scope>FUNCTION</scope>
</reference>
<reference key="13">
    <citation type="journal article" date="2009" name="Biochem. J.">
        <title>Identification of new protein substrates for the chloroplast ATP-dependent Clp protease supports its constitutive role in Arabidopsis.</title>
        <authorList>
            <person name="Stanne T.M."/>
            <person name="Sjoegren L.L."/>
            <person name="Koussevitzky S."/>
            <person name="Clarke A.K."/>
        </authorList>
    </citation>
    <scope>DISRUPTION PHENOTYPE</scope>
</reference>
<reference key="14">
    <citation type="journal article" date="2011" name="Plant Cell">
        <title>Subunit stoichiometry, evolution, and functional implications of an asymmetric plant plastid ClpP/R protease complex in Arabidopsis.</title>
        <authorList>
            <person name="Olinares P.D."/>
            <person name="Kim J."/>
            <person name="Davis J.I."/>
            <person name="van Wijk K.J."/>
        </authorList>
    </citation>
    <scope>IDENTIFICATION BY MASS SPECTROMETRY</scope>
    <scope>SUBUNIT</scope>
</reference>
<reference key="15">
    <citation type="journal article" date="2012" name="Physiol. Plantarum">
        <title>The chloroplast ATP-dependent Clp protease in vascular plants - new dimensions and future challenges.</title>
        <authorList>
            <person name="Clarke A.K."/>
        </authorList>
    </citation>
    <scope>REVIEW</scope>
</reference>
<evidence type="ECO:0000255" key="1"/>
<evidence type="ECO:0000256" key="2">
    <source>
        <dbReference type="SAM" id="MobiDB-lite"/>
    </source>
</evidence>
<evidence type="ECO:0000269" key="3">
    <source>
    </source>
</evidence>
<evidence type="ECO:0000269" key="4">
    <source>
    </source>
</evidence>
<evidence type="ECO:0000269" key="5">
    <source>
    </source>
</evidence>
<evidence type="ECO:0000269" key="6">
    <source>
    </source>
</evidence>
<evidence type="ECO:0000269" key="7">
    <source>
    </source>
</evidence>
<evidence type="ECO:0000269" key="8">
    <source>
    </source>
</evidence>
<evidence type="ECO:0000269" key="9">
    <source>
    </source>
</evidence>
<evidence type="ECO:0000269" key="10">
    <source>
    </source>
</evidence>
<evidence type="ECO:0000269" key="11">
    <source>
    </source>
</evidence>
<evidence type="ECO:0000303" key="12">
    <source>
    </source>
</evidence>
<evidence type="ECO:0000303" key="13">
    <source>
    </source>
</evidence>
<evidence type="ECO:0000303" key="14">
    <source ref="8"/>
</evidence>
<evidence type="ECO:0000305" key="15"/>
<evidence type="ECO:0000312" key="16">
    <source>
        <dbReference type="Araport" id="AT1G49970"/>
    </source>
</evidence>
<evidence type="ECO:0000312" key="17">
    <source>
        <dbReference type="EMBL" id="AAF76446.1"/>
    </source>
</evidence>